<organism>
    <name type="scientific">Lotus japonicus</name>
    <name type="common">Lotus corniculatus var. japonicus</name>
    <dbReference type="NCBI Taxonomy" id="34305"/>
    <lineage>
        <taxon>Eukaryota</taxon>
        <taxon>Viridiplantae</taxon>
        <taxon>Streptophyta</taxon>
        <taxon>Embryophyta</taxon>
        <taxon>Tracheophyta</taxon>
        <taxon>Spermatophyta</taxon>
        <taxon>Magnoliopsida</taxon>
        <taxon>eudicotyledons</taxon>
        <taxon>Gunneridae</taxon>
        <taxon>Pentapetalae</taxon>
        <taxon>rosids</taxon>
        <taxon>fabids</taxon>
        <taxon>Fabales</taxon>
        <taxon>Fabaceae</taxon>
        <taxon>Papilionoideae</taxon>
        <taxon>50 kb inversion clade</taxon>
        <taxon>NPAAA clade</taxon>
        <taxon>Hologalegina</taxon>
        <taxon>robinioid clade</taxon>
        <taxon>Loteae</taxon>
        <taxon>Lotus</taxon>
    </lineage>
</organism>
<accession>Q9BBT8</accession>
<comment type="function">
    <text evidence="1">NDH shuttles electrons from NAD(P)H:plastoquinone, via FMN and iron-sulfur (Fe-S) centers, to quinones in the photosynthetic chain and possibly in a chloroplast respiratory chain. The immediate electron acceptor for the enzyme in this species is believed to be plastoquinone. Couples the redox reaction to proton translocation, and thus conserves the redox energy in a proton gradient.</text>
</comment>
<comment type="catalytic activity">
    <reaction evidence="1">
        <text>a plastoquinone + NADH + (n+1) H(+)(in) = a plastoquinol + NAD(+) + n H(+)(out)</text>
        <dbReference type="Rhea" id="RHEA:42608"/>
        <dbReference type="Rhea" id="RHEA-COMP:9561"/>
        <dbReference type="Rhea" id="RHEA-COMP:9562"/>
        <dbReference type="ChEBI" id="CHEBI:15378"/>
        <dbReference type="ChEBI" id="CHEBI:17757"/>
        <dbReference type="ChEBI" id="CHEBI:57540"/>
        <dbReference type="ChEBI" id="CHEBI:57945"/>
        <dbReference type="ChEBI" id="CHEBI:62192"/>
    </reaction>
</comment>
<comment type="catalytic activity">
    <reaction evidence="1">
        <text>a plastoquinone + NADPH + (n+1) H(+)(in) = a plastoquinol + NADP(+) + n H(+)(out)</text>
        <dbReference type="Rhea" id="RHEA:42612"/>
        <dbReference type="Rhea" id="RHEA-COMP:9561"/>
        <dbReference type="Rhea" id="RHEA-COMP:9562"/>
        <dbReference type="ChEBI" id="CHEBI:15378"/>
        <dbReference type="ChEBI" id="CHEBI:17757"/>
        <dbReference type="ChEBI" id="CHEBI:57783"/>
        <dbReference type="ChEBI" id="CHEBI:58349"/>
        <dbReference type="ChEBI" id="CHEBI:62192"/>
    </reaction>
</comment>
<comment type="subunit">
    <text evidence="1">NDH is composed of at least 16 different subunits, 5 of which are encoded in the nucleus.</text>
</comment>
<comment type="subcellular location">
    <subcellularLocation>
        <location evidence="1">Plastid</location>
        <location evidence="1">Chloroplast thylakoid membrane</location>
        <topology evidence="1">Multi-pass membrane protein</topology>
    </subcellularLocation>
</comment>
<comment type="similarity">
    <text evidence="1">Belongs to the complex I subunit 3 family.</text>
</comment>
<gene>
    <name evidence="1" type="primary">ndhC</name>
</gene>
<sequence>MFLLYEYDIFWAFLIISIFIPILAFTISGFLAPINKGPEKLSSYESGIEPMGDAWLQFQIRYYMFALVFVVFDVETVFLYPWAMSFDVLGISVFIEALIFVLILIVGSVYAWRKGALEWS</sequence>
<protein>
    <recommendedName>
        <fullName evidence="1">NAD(P)H-quinone oxidoreductase subunit 3, chloroplastic</fullName>
        <ecNumber evidence="1">7.1.1.-</ecNumber>
    </recommendedName>
    <alternativeName>
        <fullName evidence="1">NAD(P)H dehydrogenase subunit 3</fullName>
    </alternativeName>
    <alternativeName>
        <fullName evidence="1">NADH-plastoquinone oxidoreductase subunit 3</fullName>
    </alternativeName>
</protein>
<name>NU3C_LOTJA</name>
<keyword id="KW-0150">Chloroplast</keyword>
<keyword id="KW-0472">Membrane</keyword>
<keyword id="KW-0520">NAD</keyword>
<keyword id="KW-0521">NADP</keyword>
<keyword id="KW-0934">Plastid</keyword>
<keyword id="KW-0618">Plastoquinone</keyword>
<keyword id="KW-0874">Quinone</keyword>
<keyword id="KW-0793">Thylakoid</keyword>
<keyword id="KW-1278">Translocase</keyword>
<keyword id="KW-0812">Transmembrane</keyword>
<keyword id="KW-1133">Transmembrane helix</keyword>
<keyword id="KW-0813">Transport</keyword>
<proteinExistence type="inferred from homology"/>
<reference key="1">
    <citation type="journal article" date="2000" name="DNA Res.">
        <title>Complete structure of the chloroplast genome of a legume, Lotus japonicus.</title>
        <authorList>
            <person name="Kato T."/>
            <person name="Kaneko T."/>
            <person name="Sato S."/>
            <person name="Nakamura Y."/>
            <person name="Tabata S."/>
        </authorList>
    </citation>
    <scope>NUCLEOTIDE SEQUENCE [LARGE SCALE GENOMIC DNA]</scope>
    <source>
        <strain>cv. Miyakojima MG-20</strain>
    </source>
</reference>
<dbReference type="EC" id="7.1.1.-" evidence="1"/>
<dbReference type="EMBL" id="AP002983">
    <property type="protein sequence ID" value="BAB33181.1"/>
    <property type="molecule type" value="Genomic_DNA"/>
</dbReference>
<dbReference type="RefSeq" id="NP_084783.1">
    <property type="nucleotide sequence ID" value="NC_002694.1"/>
</dbReference>
<dbReference type="SMR" id="Q9BBT8"/>
<dbReference type="GeneID" id="802910"/>
<dbReference type="GO" id="GO:0009535">
    <property type="term" value="C:chloroplast thylakoid membrane"/>
    <property type="evidence" value="ECO:0007669"/>
    <property type="project" value="UniProtKB-SubCell"/>
</dbReference>
<dbReference type="GO" id="GO:0030964">
    <property type="term" value="C:NADH dehydrogenase complex"/>
    <property type="evidence" value="ECO:0007669"/>
    <property type="project" value="TreeGrafter"/>
</dbReference>
<dbReference type="GO" id="GO:0008137">
    <property type="term" value="F:NADH dehydrogenase (ubiquinone) activity"/>
    <property type="evidence" value="ECO:0007669"/>
    <property type="project" value="InterPro"/>
</dbReference>
<dbReference type="GO" id="GO:0048038">
    <property type="term" value="F:quinone binding"/>
    <property type="evidence" value="ECO:0007669"/>
    <property type="project" value="UniProtKB-KW"/>
</dbReference>
<dbReference type="GO" id="GO:0019684">
    <property type="term" value="P:photosynthesis, light reaction"/>
    <property type="evidence" value="ECO:0007669"/>
    <property type="project" value="UniProtKB-UniRule"/>
</dbReference>
<dbReference type="FunFam" id="1.20.58.1610:FF:000001">
    <property type="entry name" value="NAD(P)H-quinone oxidoreductase subunit 3, chloroplastic"/>
    <property type="match status" value="1"/>
</dbReference>
<dbReference type="Gene3D" id="1.20.58.1610">
    <property type="entry name" value="NADH:ubiquinone/plastoquinone oxidoreductase, chain 3"/>
    <property type="match status" value="1"/>
</dbReference>
<dbReference type="HAMAP" id="MF_01394">
    <property type="entry name" value="NDH1_NuoA"/>
    <property type="match status" value="1"/>
</dbReference>
<dbReference type="InterPro" id="IPR023043">
    <property type="entry name" value="NAD(P)H_OxRDtase_bac/plastid"/>
</dbReference>
<dbReference type="InterPro" id="IPR000440">
    <property type="entry name" value="NADH_UbQ/plastoQ_OxRdtase_su3"/>
</dbReference>
<dbReference type="InterPro" id="IPR038430">
    <property type="entry name" value="NDAH_ubi_oxred_su3_sf"/>
</dbReference>
<dbReference type="PANTHER" id="PTHR11058">
    <property type="entry name" value="NADH-UBIQUINONE OXIDOREDUCTASE CHAIN 3"/>
    <property type="match status" value="1"/>
</dbReference>
<dbReference type="PANTHER" id="PTHR11058:SF9">
    <property type="entry name" value="NADH-UBIQUINONE OXIDOREDUCTASE CHAIN 3"/>
    <property type="match status" value="1"/>
</dbReference>
<dbReference type="Pfam" id="PF00507">
    <property type="entry name" value="Oxidored_q4"/>
    <property type="match status" value="1"/>
</dbReference>
<evidence type="ECO:0000255" key="1">
    <source>
        <dbReference type="HAMAP-Rule" id="MF_01394"/>
    </source>
</evidence>
<feature type="chain" id="PRO_0000117845" description="NAD(P)H-quinone oxidoreductase subunit 3, chloroplastic">
    <location>
        <begin position="1"/>
        <end position="120"/>
    </location>
</feature>
<feature type="transmembrane region" description="Helical" evidence="1">
    <location>
        <begin position="9"/>
        <end position="29"/>
    </location>
</feature>
<feature type="transmembrane region" description="Helical" evidence="1">
    <location>
        <begin position="64"/>
        <end position="84"/>
    </location>
</feature>
<feature type="transmembrane region" description="Helical" evidence="1">
    <location>
        <begin position="88"/>
        <end position="108"/>
    </location>
</feature>
<geneLocation type="chloroplast"/>